<name>RUFY3_PONAB</name>
<gene>
    <name evidence="3" type="primary">RUFY3</name>
</gene>
<accession>Q5R4V2</accession>
<evidence type="ECO:0000250" key="1">
    <source>
        <dbReference type="UniProtKB" id="Q5FVJ0"/>
    </source>
</evidence>
<evidence type="ECO:0000250" key="2">
    <source>
        <dbReference type="UniProtKB" id="Q7L099"/>
    </source>
</evidence>
<evidence type="ECO:0000250" key="3">
    <source>
        <dbReference type="UniProtKB" id="Q9D394"/>
    </source>
</evidence>
<evidence type="ECO:0000255" key="4"/>
<evidence type="ECO:0000255" key="5">
    <source>
        <dbReference type="PROSITE-ProRule" id="PRU00178"/>
    </source>
</evidence>
<evidence type="ECO:0000305" key="6"/>
<keyword id="KW-0965">Cell junction</keyword>
<keyword id="KW-0966">Cell projection</keyword>
<keyword id="KW-0175">Coiled coil</keyword>
<keyword id="KW-0963">Cytoplasm</keyword>
<keyword id="KW-0217">Developmental protein</keyword>
<keyword id="KW-0221">Differentiation</keyword>
<keyword id="KW-0458">Lysosome</keyword>
<keyword id="KW-0472">Membrane</keyword>
<keyword id="KW-0524">Neurogenesis</keyword>
<keyword id="KW-0553">Oncogene</keyword>
<keyword id="KW-0597">Phosphoprotein</keyword>
<keyword id="KW-1185">Reference proteome</keyword>
<protein>
    <recommendedName>
        <fullName evidence="6">Protein RUFY3</fullName>
    </recommendedName>
</protein>
<comment type="function">
    <text evidence="1 2 3">ARL8 effector that promotes the coupling of endolysosomes to dynein-dynactin for retrograde transport along microtubules. Acts by binding both GTP-bound ARL8 and dynein-dynactin. In nonneuronal cells, promotes concentration of endolysosomes in the juxtanuclear area. In hippocampal neurons, drives retrograde transport of endolysosomes from the axon to the soma (By similarity). Plays a role in the generation of neuronal polarity formation and axon growth. Implicated in the formation of a single axon by developing neurons. May inhibit the formation of additional axons by inhibition of PI3K in minor neuronal processes (By similarity). Plays a role in the formation of F-actin-enriched protrusive structures at the cell periphery (By similarity). Plays a role in cytoskeletal organization by regulating the subcellular localization of FSCN1 and DBN1 at axonal growth cones (By similarity).</text>
</comment>
<comment type="subunit">
    <text evidence="1 2 3">Interacts with PAK1 (By similarity). Interacts (via C-terminus) with Ras-related Rab-5 proteins (By similarity). Interacts (via C-terminus) with Ras-related Rap-2 proteins (By similarity). Interacts with PIK3CA and PIK3R1 (By similarity). Interacts (via N-terminus) with FSCN1; this interaction induces neuron axon development (By similarity). Interacts with DBN1 (By similarity). Interacts (via the second coiled coil) with GTP-, but not GDP-bound ARL8A and ARL8B. Interacts with dynactin/DCTN1 and the dynein intermediate chain DYNC1I1/2. Directly interacts with DYNC1LI1 (By similarity).</text>
</comment>
<comment type="subcellular location">
    <subcellularLocation>
        <location evidence="2">Cytoplasm</location>
    </subcellularLocation>
    <subcellularLocation>
        <location evidence="2">Endomembrane system</location>
    </subcellularLocation>
    <subcellularLocation>
        <location evidence="2">Cell projection</location>
        <location evidence="2">Invadopodium</location>
    </subcellularLocation>
    <subcellularLocation>
        <location evidence="3">Cell projection</location>
        <location evidence="3">Growth cone</location>
    </subcellularLocation>
    <subcellularLocation>
        <location evidence="1">Perikaryon</location>
    </subcellularLocation>
    <subcellularLocation>
        <location evidence="1">Cell projection</location>
    </subcellularLocation>
    <subcellularLocation>
        <location evidence="3">Cell projection</location>
        <location evidence="3">Filopodium</location>
    </subcellularLocation>
    <subcellularLocation>
        <location evidence="3">Cell projection</location>
        <location evidence="3">Lamellipodium</location>
    </subcellularLocation>
    <subcellularLocation>
        <location evidence="2">Lysosome</location>
    </subcellularLocation>
    <text evidence="1 2 3">Colocalizes with PAK1, F-actin, myosins and integrins in invadopodia at the cell periphery (By similarity). Colocalizes with Ras-related Rab-5 proteins in cytoplasmic vesicles (By similarity). Accumulates in axon growth cones in a F-actin-dependent manner (By similarity). Colocalizes with FSCN1 and F-actin at filipodia and lamellipodia of axonal growth cones (By similarity). Localized in F-actin-enriched filopodia and lamellipodia at axonal growth cones (By similarity). Colocalizes with DBN1 and F-actin at transitional domain of the axonal growth cone (By similarity). Recruitment to endolysosomes partially depends upon the presence of ARL8 (By similarity).</text>
</comment>
<comment type="domain">
    <text evidence="2">The second coiled coil domain is involved in the interaction with GTP-bound ARL8B.</text>
</comment>
<comment type="PTM">
    <text evidence="2">Phosphorylated by PAK1.</text>
</comment>
<sequence length="469" mass="52893">MSALTPPTDMPTPTTDKITQAAMETIYLCKFRVSMDGEWLCLRELDDISLTPDPEPTHEDPNYLMANERMNLMNMAKLSIKGLIESALNLGRTLDSDYAPLQQFFVVMEHCLKHGLKAKKTFLGQNKSFWGPLELVEKLVPEAAEITASVKDLPGLKTPVGRGRAWLRLALMQKKLSEYMKALINKKELLSEFYEPNALMMEEEGAIIAGLLVGLNVIDANFCMKGEDLDSQVGVIDFSMYLKDGNSSKGTEGDGQITAILDQKNYVEELNRHLNATVNNLQAKVDALEKSNTKLTGELAVANNRIITLQEEMERVKEESSYILESNRKGPKQDRTAEGQALSEARKHLKEETQLRLDVEKELEMQISMRQEMELAMKMLEKDVCEKQDALVSLRQQLDDLRALKHELAFKLQSSDLGVKQKSELNSRLEEKTNQMAATIKQLEQSEKDLVKQAKTLNSAANKLIPKHH</sequence>
<dbReference type="EMBL" id="CR861139">
    <property type="protein sequence ID" value="CAH93214.1"/>
    <property type="molecule type" value="mRNA"/>
</dbReference>
<dbReference type="RefSeq" id="NP_001126891.1">
    <property type="nucleotide sequence ID" value="NM_001133419.1"/>
</dbReference>
<dbReference type="SMR" id="Q5R4V2"/>
<dbReference type="FunCoup" id="Q5R4V2">
    <property type="interactions" value="429"/>
</dbReference>
<dbReference type="STRING" id="9601.ENSPPYP00000016540"/>
<dbReference type="GeneID" id="100173906"/>
<dbReference type="KEGG" id="pon:100173906"/>
<dbReference type="CTD" id="22902"/>
<dbReference type="eggNOG" id="KOG4381">
    <property type="taxonomic scope" value="Eukaryota"/>
</dbReference>
<dbReference type="InParanoid" id="Q5R4V2"/>
<dbReference type="OrthoDB" id="79871at2759"/>
<dbReference type="Proteomes" id="UP000001595">
    <property type="component" value="Unplaced"/>
</dbReference>
<dbReference type="GO" id="GO:0070161">
    <property type="term" value="C:anchoring junction"/>
    <property type="evidence" value="ECO:0007669"/>
    <property type="project" value="UniProtKB-KW"/>
</dbReference>
<dbReference type="GO" id="GO:0030424">
    <property type="term" value="C:axon"/>
    <property type="evidence" value="ECO:0000250"/>
    <property type="project" value="UniProtKB"/>
</dbReference>
<dbReference type="GO" id="GO:0005737">
    <property type="term" value="C:cytoplasm"/>
    <property type="evidence" value="ECO:0000250"/>
    <property type="project" value="UniProtKB"/>
</dbReference>
<dbReference type="GO" id="GO:0030425">
    <property type="term" value="C:dendrite"/>
    <property type="evidence" value="ECO:0000250"/>
    <property type="project" value="UniProtKB"/>
</dbReference>
<dbReference type="GO" id="GO:0036019">
    <property type="term" value="C:endolysosome"/>
    <property type="evidence" value="ECO:0000250"/>
    <property type="project" value="UniProtKB"/>
</dbReference>
<dbReference type="GO" id="GO:0030175">
    <property type="term" value="C:filopodium"/>
    <property type="evidence" value="ECO:0000250"/>
    <property type="project" value="UniProtKB"/>
</dbReference>
<dbReference type="GO" id="GO:0030426">
    <property type="term" value="C:growth cone"/>
    <property type="evidence" value="ECO:0000250"/>
    <property type="project" value="UniProtKB"/>
</dbReference>
<dbReference type="GO" id="GO:0030027">
    <property type="term" value="C:lamellipodium"/>
    <property type="evidence" value="ECO:0000250"/>
    <property type="project" value="UniProtKB"/>
</dbReference>
<dbReference type="GO" id="GO:0016020">
    <property type="term" value="C:membrane"/>
    <property type="evidence" value="ECO:0007669"/>
    <property type="project" value="UniProtKB-KW"/>
</dbReference>
<dbReference type="GO" id="GO:0043204">
    <property type="term" value="C:perikaryon"/>
    <property type="evidence" value="ECO:0000250"/>
    <property type="project" value="UniProtKB"/>
</dbReference>
<dbReference type="GO" id="GO:0034452">
    <property type="term" value="F:dynactin binding"/>
    <property type="evidence" value="ECO:0000250"/>
    <property type="project" value="UniProtKB"/>
</dbReference>
<dbReference type="GO" id="GO:0007015">
    <property type="term" value="P:actin filament organization"/>
    <property type="evidence" value="ECO:0000250"/>
    <property type="project" value="UniProtKB"/>
</dbReference>
<dbReference type="GO" id="GO:0030154">
    <property type="term" value="P:cell differentiation"/>
    <property type="evidence" value="ECO:0007669"/>
    <property type="project" value="UniProtKB-KW"/>
</dbReference>
<dbReference type="GO" id="GO:0050771">
    <property type="term" value="P:negative regulation of axonogenesis"/>
    <property type="evidence" value="ECO:0000250"/>
    <property type="project" value="UniProtKB"/>
</dbReference>
<dbReference type="GO" id="GO:0007399">
    <property type="term" value="P:nervous system development"/>
    <property type="evidence" value="ECO:0007669"/>
    <property type="project" value="UniProtKB-KW"/>
</dbReference>
<dbReference type="GO" id="GO:0045773">
    <property type="term" value="P:positive regulation of axon extension"/>
    <property type="evidence" value="ECO:0000250"/>
    <property type="project" value="UniProtKB"/>
</dbReference>
<dbReference type="GO" id="GO:0030335">
    <property type="term" value="P:positive regulation of cell migration"/>
    <property type="evidence" value="ECO:0000250"/>
    <property type="project" value="UniProtKB"/>
</dbReference>
<dbReference type="GO" id="GO:0090316">
    <property type="term" value="P:positive regulation of intracellular protein transport"/>
    <property type="evidence" value="ECO:0000250"/>
    <property type="project" value="UniProtKB"/>
</dbReference>
<dbReference type="GO" id="GO:2001019">
    <property type="term" value="P:positive regulation of retrograde axon cargo transport"/>
    <property type="evidence" value="ECO:0000250"/>
    <property type="project" value="UniProtKB"/>
</dbReference>
<dbReference type="GO" id="GO:2000114">
    <property type="term" value="P:regulation of establishment of cell polarity"/>
    <property type="evidence" value="ECO:0000250"/>
    <property type="project" value="UniProtKB"/>
</dbReference>
<dbReference type="CDD" id="cd17696">
    <property type="entry name" value="RUN_RUFY3"/>
    <property type="match status" value="1"/>
</dbReference>
<dbReference type="FunFam" id="1.20.58.900:FF:000001">
    <property type="entry name" value="RUN and FYVE domain containing 2"/>
    <property type="match status" value="1"/>
</dbReference>
<dbReference type="FunFam" id="1.20.5.170:FF:000013">
    <property type="entry name" value="RUN and FYVE domain-containing 1"/>
    <property type="match status" value="1"/>
</dbReference>
<dbReference type="Gene3D" id="1.20.5.170">
    <property type="match status" value="1"/>
</dbReference>
<dbReference type="Gene3D" id="1.20.58.900">
    <property type="match status" value="1"/>
</dbReference>
<dbReference type="InterPro" id="IPR047335">
    <property type="entry name" value="RUFY1-3"/>
</dbReference>
<dbReference type="InterPro" id="IPR004012">
    <property type="entry name" value="Run_dom"/>
</dbReference>
<dbReference type="InterPro" id="IPR037213">
    <property type="entry name" value="Run_dom_sf"/>
</dbReference>
<dbReference type="InterPro" id="IPR047334">
    <property type="entry name" value="RUN_RUFY3"/>
</dbReference>
<dbReference type="PANTHER" id="PTHR45956:SF1">
    <property type="entry name" value="PROTEIN RUFY3"/>
    <property type="match status" value="1"/>
</dbReference>
<dbReference type="PANTHER" id="PTHR45956">
    <property type="entry name" value="RUN AND FYVE DOMAIN-CONTAINING PROTEIN 2-LIKE PROTEIN"/>
    <property type="match status" value="1"/>
</dbReference>
<dbReference type="Pfam" id="PF02759">
    <property type="entry name" value="RUN"/>
    <property type="match status" value="1"/>
</dbReference>
<dbReference type="SMART" id="SM00593">
    <property type="entry name" value="RUN"/>
    <property type="match status" value="1"/>
</dbReference>
<dbReference type="SUPFAM" id="SSF140741">
    <property type="entry name" value="RUN domain-like"/>
    <property type="match status" value="1"/>
</dbReference>
<dbReference type="PROSITE" id="PS50826">
    <property type="entry name" value="RUN"/>
    <property type="match status" value="1"/>
</dbReference>
<proteinExistence type="evidence at transcript level"/>
<organism>
    <name type="scientific">Pongo abelii</name>
    <name type="common">Sumatran orangutan</name>
    <name type="synonym">Pongo pygmaeus abelii</name>
    <dbReference type="NCBI Taxonomy" id="9601"/>
    <lineage>
        <taxon>Eukaryota</taxon>
        <taxon>Metazoa</taxon>
        <taxon>Chordata</taxon>
        <taxon>Craniata</taxon>
        <taxon>Vertebrata</taxon>
        <taxon>Euteleostomi</taxon>
        <taxon>Mammalia</taxon>
        <taxon>Eutheria</taxon>
        <taxon>Euarchontoglires</taxon>
        <taxon>Primates</taxon>
        <taxon>Haplorrhini</taxon>
        <taxon>Catarrhini</taxon>
        <taxon>Hominidae</taxon>
        <taxon>Pongo</taxon>
    </lineage>
</organism>
<reference key="1">
    <citation type="submission" date="2004-11" db="EMBL/GenBank/DDBJ databases">
        <authorList>
            <consortium name="The German cDNA consortium"/>
        </authorList>
    </citation>
    <scope>NUCLEOTIDE SEQUENCE [LARGE SCALE MRNA]</scope>
    <source>
        <tissue>Brain cortex</tissue>
    </source>
</reference>
<feature type="chain" id="PRO_0000245835" description="Protein RUFY3">
    <location>
        <begin position="1"/>
        <end position="469"/>
    </location>
</feature>
<feature type="domain" description="RUN" evidence="5">
    <location>
        <begin position="95"/>
        <end position="227"/>
    </location>
</feature>
<feature type="coiled-coil region" evidence="4">
    <location>
        <begin position="271"/>
        <end position="362"/>
    </location>
</feature>
<feature type="coiled-coil region" evidence="4">
    <location>
        <begin position="422"/>
        <end position="463"/>
    </location>
</feature>
<feature type="modified residue" description="Phosphothreonine" evidence="1">
    <location>
        <position position="5"/>
    </location>
</feature>
<feature type="modified residue" description="Phosphothreonine" evidence="1">
    <location>
        <position position="12"/>
    </location>
</feature>
<feature type="modified residue" description="Phosphoserine" evidence="3">
    <location>
        <position position="34"/>
    </location>
</feature>
<feature type="modified residue" description="Phosphoserine" evidence="3">
    <location>
        <position position="49"/>
    </location>
</feature>
<feature type="modified residue" description="Phosphothreonine" evidence="3">
    <location>
        <position position="51"/>
    </location>
</feature>